<feature type="chain" id="PRO_0000287858" description="NADH-quinone oxidoreductase subunit C">
    <location>
        <begin position="1"/>
        <end position="242"/>
    </location>
</feature>
<feature type="region of interest" description="Insert">
    <location>
        <begin position="67"/>
        <end position="101"/>
    </location>
</feature>
<sequence length="242" mass="27895">MTLDKLIEKLAAKSSILITPITVKDYLAYKIEPNFLLPFLKALKESEELRFTLLTDLFGADFPQNNVVNSVGLGHKEQGAKPITNRRTTSDNVGESKSIDYKRFEVVYNLLSLKLNKRLIIKVYISEKETIPSAMNIFSAACWYEREVYDMYGVNFEGNDDKRRILTDYEFEGHPLRKDFPLTGYTQVKYDEKLKKVAYEPVDLDIEYREFDFSSHWHSPSYVLPGDEKATDVIPAKAGIQK</sequence>
<reference key="1">
    <citation type="journal article" date="2001" name="Science">
        <title>Mechanisms of evolution in Rickettsia conorii and R. prowazekii.</title>
        <authorList>
            <person name="Ogata H."/>
            <person name="Audic S."/>
            <person name="Renesto-Audiffren P."/>
            <person name="Fournier P.-E."/>
            <person name="Barbe V."/>
            <person name="Samson D."/>
            <person name="Roux V."/>
            <person name="Cossart P."/>
            <person name="Weissenbach J."/>
            <person name="Claverie J.-M."/>
            <person name="Raoult D."/>
        </authorList>
    </citation>
    <scope>NUCLEOTIDE SEQUENCE [LARGE SCALE GENOMIC DNA]</scope>
    <source>
        <strain>ATCC VR-613 / Malish 7</strain>
    </source>
</reference>
<name>NUOC_RICCN</name>
<dbReference type="EC" id="7.1.1.-" evidence="1"/>
<dbReference type="EMBL" id="AE006914">
    <property type="protein sequence ID" value="AAL03021.1"/>
    <property type="molecule type" value="Genomic_DNA"/>
</dbReference>
<dbReference type="PIR" id="C97760">
    <property type="entry name" value="C97760"/>
</dbReference>
<dbReference type="RefSeq" id="WP_010977125.1">
    <property type="nucleotide sequence ID" value="NC_003103.1"/>
</dbReference>
<dbReference type="SMR" id="Q92ID7"/>
<dbReference type="GeneID" id="928702"/>
<dbReference type="KEGG" id="rco:RC0483"/>
<dbReference type="PATRIC" id="fig|272944.4.peg.554"/>
<dbReference type="HOGENOM" id="CLU_042628_2_1_5"/>
<dbReference type="Proteomes" id="UP000000816">
    <property type="component" value="Chromosome"/>
</dbReference>
<dbReference type="GO" id="GO:0005886">
    <property type="term" value="C:plasma membrane"/>
    <property type="evidence" value="ECO:0007669"/>
    <property type="project" value="UniProtKB-SubCell"/>
</dbReference>
<dbReference type="GO" id="GO:0008137">
    <property type="term" value="F:NADH dehydrogenase (ubiquinone) activity"/>
    <property type="evidence" value="ECO:0007669"/>
    <property type="project" value="InterPro"/>
</dbReference>
<dbReference type="GO" id="GO:0050136">
    <property type="term" value="F:NADH:ubiquinone reductase (non-electrogenic) activity"/>
    <property type="evidence" value="ECO:0007669"/>
    <property type="project" value="UniProtKB-UniRule"/>
</dbReference>
<dbReference type="GO" id="GO:0048038">
    <property type="term" value="F:quinone binding"/>
    <property type="evidence" value="ECO:0007669"/>
    <property type="project" value="UniProtKB-KW"/>
</dbReference>
<dbReference type="Gene3D" id="3.30.460.80">
    <property type="entry name" value="NADH:ubiquinone oxidoreductase, 30kDa subunit"/>
    <property type="match status" value="1"/>
</dbReference>
<dbReference type="HAMAP" id="MF_01357">
    <property type="entry name" value="NDH1_NuoC"/>
    <property type="match status" value="1"/>
</dbReference>
<dbReference type="InterPro" id="IPR010218">
    <property type="entry name" value="NADH_DH_suC"/>
</dbReference>
<dbReference type="InterPro" id="IPR037232">
    <property type="entry name" value="NADH_quin_OxRdtase_su_C/D-like"/>
</dbReference>
<dbReference type="InterPro" id="IPR001268">
    <property type="entry name" value="NADH_UbQ_OxRdtase_30kDa_su"/>
</dbReference>
<dbReference type="InterPro" id="IPR022436">
    <property type="entry name" value="RPE2"/>
</dbReference>
<dbReference type="NCBIfam" id="NF004731">
    <property type="entry name" value="PRK06074.1-3"/>
    <property type="match status" value="1"/>
</dbReference>
<dbReference type="NCBIfam" id="TIGR03774">
    <property type="entry name" value="RPE2"/>
    <property type="match status" value="1"/>
</dbReference>
<dbReference type="PANTHER" id="PTHR10884:SF14">
    <property type="entry name" value="NADH DEHYDROGENASE [UBIQUINONE] IRON-SULFUR PROTEIN 3, MITOCHONDRIAL"/>
    <property type="match status" value="1"/>
</dbReference>
<dbReference type="PANTHER" id="PTHR10884">
    <property type="entry name" value="NADH DEHYDROGENASE UBIQUINONE IRON-SULFUR PROTEIN 3"/>
    <property type="match status" value="1"/>
</dbReference>
<dbReference type="Pfam" id="PF00329">
    <property type="entry name" value="Complex1_30kDa"/>
    <property type="match status" value="1"/>
</dbReference>
<dbReference type="SUPFAM" id="SSF143243">
    <property type="entry name" value="Nqo5-like"/>
    <property type="match status" value="1"/>
</dbReference>
<organism>
    <name type="scientific">Rickettsia conorii (strain ATCC VR-613 / Malish 7)</name>
    <dbReference type="NCBI Taxonomy" id="272944"/>
    <lineage>
        <taxon>Bacteria</taxon>
        <taxon>Pseudomonadati</taxon>
        <taxon>Pseudomonadota</taxon>
        <taxon>Alphaproteobacteria</taxon>
        <taxon>Rickettsiales</taxon>
        <taxon>Rickettsiaceae</taxon>
        <taxon>Rickettsieae</taxon>
        <taxon>Rickettsia</taxon>
        <taxon>spotted fever group</taxon>
    </lineage>
</organism>
<protein>
    <recommendedName>
        <fullName evidence="1">NADH-quinone oxidoreductase subunit C</fullName>
        <ecNumber evidence="1">7.1.1.-</ecNumber>
    </recommendedName>
    <alternativeName>
        <fullName evidence="1">NADH dehydrogenase I subunit C</fullName>
    </alternativeName>
    <alternativeName>
        <fullName evidence="1">NDH-1 subunit C</fullName>
    </alternativeName>
</protein>
<gene>
    <name evidence="1" type="primary">nuoC</name>
    <name type="ordered locus">RC0483</name>
</gene>
<comment type="function">
    <text evidence="1">NDH-1 shuttles electrons from NADH, via FMN and iron-sulfur (Fe-S) centers, to quinones in the respiratory chain. The immediate electron acceptor for the enzyme in this species is believed to be ubiquinone. Couples the redox reaction to proton translocation (for every two electrons transferred, four hydrogen ions are translocated across the cytoplasmic membrane), and thus conserves the redox energy in a proton gradient.</text>
</comment>
<comment type="catalytic activity">
    <reaction evidence="1">
        <text>a quinone + NADH + 5 H(+)(in) = a quinol + NAD(+) + 4 H(+)(out)</text>
        <dbReference type="Rhea" id="RHEA:57888"/>
        <dbReference type="ChEBI" id="CHEBI:15378"/>
        <dbReference type="ChEBI" id="CHEBI:24646"/>
        <dbReference type="ChEBI" id="CHEBI:57540"/>
        <dbReference type="ChEBI" id="CHEBI:57945"/>
        <dbReference type="ChEBI" id="CHEBI:132124"/>
    </reaction>
</comment>
<comment type="subunit">
    <text evidence="1">NDH-1 is composed of 14 different subunits. Subunits NuoB, C, D, E, F, and G constitute the peripheral sector of the complex.</text>
</comment>
<comment type="subcellular location">
    <subcellularLocation>
        <location evidence="1">Cell inner membrane</location>
        <topology evidence="1">Peripheral membrane protein</topology>
        <orientation evidence="1">Cytoplasmic side</orientation>
    </subcellularLocation>
</comment>
<comment type="similarity">
    <text evidence="1">Belongs to the complex I 30 kDa subunit family.</text>
</comment>
<proteinExistence type="inferred from homology"/>
<keyword id="KW-0997">Cell inner membrane</keyword>
<keyword id="KW-1003">Cell membrane</keyword>
<keyword id="KW-0472">Membrane</keyword>
<keyword id="KW-0520">NAD</keyword>
<keyword id="KW-0874">Quinone</keyword>
<keyword id="KW-1278">Translocase</keyword>
<keyword id="KW-0813">Transport</keyword>
<keyword id="KW-0830">Ubiquinone</keyword>
<evidence type="ECO:0000255" key="1">
    <source>
        <dbReference type="HAMAP-Rule" id="MF_01357"/>
    </source>
</evidence>
<accession>Q92ID7</accession>